<evidence type="ECO:0000255" key="1"/>
<evidence type="ECO:0000269" key="2">
    <source>
    </source>
</evidence>
<evidence type="ECO:0000269" key="3">
    <source>
    </source>
</evidence>
<evidence type="ECO:0000269" key="4">
    <source>
    </source>
</evidence>
<evidence type="ECO:0000305" key="5">
    <source>
    </source>
</evidence>
<evidence type="ECO:0000305" key="6">
    <source>
    </source>
</evidence>
<reference key="1">
    <citation type="journal article" date="1997" name="Science">
        <title>The complete genome sequence of Escherichia coli K-12.</title>
        <authorList>
            <person name="Blattner F.R."/>
            <person name="Plunkett G. III"/>
            <person name="Bloch C.A."/>
            <person name="Perna N.T."/>
            <person name="Burland V."/>
            <person name="Riley M."/>
            <person name="Collado-Vides J."/>
            <person name="Glasner J.D."/>
            <person name="Rode C.K."/>
            <person name="Mayhew G.F."/>
            <person name="Gregor J."/>
            <person name="Davis N.W."/>
            <person name="Kirkpatrick H.A."/>
            <person name="Goeden M.A."/>
            <person name="Rose D.J."/>
            <person name="Mau B."/>
            <person name="Shao Y."/>
        </authorList>
    </citation>
    <scope>NUCLEOTIDE SEQUENCE [LARGE SCALE GENOMIC DNA]</scope>
    <source>
        <strain>K12 / MG1655 / ATCC 47076</strain>
    </source>
</reference>
<reference key="2">
    <citation type="journal article" date="2006" name="Mol. Syst. Biol.">
        <title>Highly accurate genome sequences of Escherichia coli K-12 strains MG1655 and W3110.</title>
        <authorList>
            <person name="Hayashi K."/>
            <person name="Morooka N."/>
            <person name="Yamamoto Y."/>
            <person name="Fujita K."/>
            <person name="Isono K."/>
            <person name="Choi S."/>
            <person name="Ohtsubo E."/>
            <person name="Baba T."/>
            <person name="Wanner B.L."/>
            <person name="Mori H."/>
            <person name="Horiuchi T."/>
        </authorList>
    </citation>
    <scope>NUCLEOTIDE SEQUENCE [LARGE SCALE GENOMIC DNA]</scope>
    <source>
        <strain>K12 / W3110 / ATCC 27325 / DSM 5911</strain>
    </source>
</reference>
<reference key="3">
    <citation type="journal article" date="2008" name="Mol. Microbiol.">
        <title>Small membrane proteins found by comparative genomics and ribosome binding site models.</title>
        <authorList>
            <person name="Hemm M.R."/>
            <person name="Paul B.J."/>
            <person name="Schneider T.D."/>
            <person name="Storz G."/>
            <person name="Rudd K.E."/>
        </authorList>
    </citation>
    <scope>IDENTIFICATION</scope>
    <scope>SUBCELLULAR LOCATION</scope>
    <scope>INDUCTION</scope>
    <source>
        <strain>K12 / MG1655 / ATCC 47076</strain>
    </source>
</reference>
<reference key="4">
    <citation type="journal article" date="2010" name="J. Bacteriol.">
        <title>Small stress response proteins in Escherichia coli: proteins missed by classical proteomic studies.</title>
        <authorList>
            <person name="Hemm M.R."/>
            <person name="Paul B.J."/>
            <person name="Miranda-Rios J."/>
            <person name="Zhang A."/>
            <person name="Soltanzad N."/>
            <person name="Storz G."/>
        </authorList>
    </citation>
    <scope>INDUCTION</scope>
    <source>
        <strain>K12 / MG1655 / ATCC 47076</strain>
    </source>
</reference>
<reference key="5">
    <citation type="journal article" date="2011" name="J. Biol. Chem.">
        <title>Membrane localization of small proteins in Escherichia coli.</title>
        <authorList>
            <person name="Fontaine F."/>
            <person name="Fuchs R.T."/>
            <person name="Storz G."/>
        </authorList>
    </citation>
    <scope>SUBCELLULAR LOCATION</scope>
    <scope>TOPOLOGY</scope>
    <source>
        <strain>K12 / MG1655 / ATCC 47076</strain>
    </source>
</reference>
<protein>
    <recommendedName>
        <fullName>Uncharacterized protein YoaJ</fullName>
    </recommendedName>
</protein>
<sequence length="24" mass="2691">MKKTTIIMMGVAIIVVLGTELGWW</sequence>
<proteinExistence type="evidence at protein level"/>
<gene>
    <name type="primary">yoaJ</name>
    <name type="ordered locus">b4675</name>
    <name type="ordered locus">JW5292.2</name>
</gene>
<keyword id="KW-0997">Cell inner membrane</keyword>
<keyword id="KW-1003">Cell membrane</keyword>
<keyword id="KW-0472">Membrane</keyword>
<keyword id="KW-1185">Reference proteome</keyword>
<keyword id="KW-0346">Stress response</keyword>
<keyword id="KW-0812">Transmembrane</keyword>
<keyword id="KW-1133">Transmembrane helix</keyword>
<dbReference type="EMBL" id="U00096">
    <property type="protein sequence ID" value="ACO59995.1"/>
    <property type="molecule type" value="Genomic_DNA"/>
</dbReference>
<dbReference type="EMBL" id="AP009048">
    <property type="status" value="NOT_ANNOTATED_CDS"/>
    <property type="molecule type" value="Genomic_DNA"/>
</dbReference>
<dbReference type="RefSeq" id="WP_001386836.1">
    <property type="nucleotide sequence ID" value="NZ_STEB01000009.1"/>
</dbReference>
<dbReference type="RefSeq" id="YP_002791243.1">
    <property type="nucleotide sequence ID" value="NC_000913.3"/>
</dbReference>
<dbReference type="STRING" id="511145.b4675"/>
<dbReference type="PaxDb" id="511145-b4675"/>
<dbReference type="EnsemblBacteria" id="ACO59995">
    <property type="protein sequence ID" value="ACO59995"/>
    <property type="gene ID" value="b4675"/>
</dbReference>
<dbReference type="GeneID" id="7751648"/>
<dbReference type="GeneID" id="93776042"/>
<dbReference type="KEGG" id="eco:b4675"/>
<dbReference type="PATRIC" id="fig|83333.113.peg.1850"/>
<dbReference type="InParanoid" id="C1P603"/>
<dbReference type="BioCyc" id="EcoCyc:MONOMER0-2875"/>
<dbReference type="PRO" id="PR:C1P603"/>
<dbReference type="Proteomes" id="UP000000625">
    <property type="component" value="Chromosome"/>
</dbReference>
<dbReference type="GO" id="GO:0005886">
    <property type="term" value="C:plasma membrane"/>
    <property type="evidence" value="ECO:0000314"/>
    <property type="project" value="EcoCyc"/>
</dbReference>
<dbReference type="NCBIfam" id="NF011343">
    <property type="entry name" value="PRK14760.1"/>
    <property type="match status" value="1"/>
</dbReference>
<comment type="subcellular location">
    <subcellularLocation>
        <location evidence="5 6">Cell inner membrane</location>
        <topology evidence="2 4">Single-pass membrane protein</topology>
    </subcellularLocation>
    <text>Some protein is also seen in the soluble fraction of the cell extracts.</text>
</comment>
<comment type="induction">
    <text evidence="2 3">Constitutively expressed, induced by thiol oxidant diamide, slightly at 45 degrees and slightly at pH 5.5 Celsius (at protein level).</text>
</comment>
<feature type="chain" id="PRO_0000381982" description="Uncharacterized protein YoaJ">
    <location>
        <begin position="1"/>
        <end position="24"/>
    </location>
</feature>
<feature type="topological domain" description="Cytoplasmic" evidence="6">
    <location>
        <begin position="1"/>
        <end position="3"/>
    </location>
</feature>
<feature type="transmembrane region" description="Helical" evidence="1">
    <location>
        <begin position="4"/>
        <end position="24"/>
    </location>
</feature>
<organism>
    <name type="scientific">Escherichia coli (strain K12)</name>
    <dbReference type="NCBI Taxonomy" id="83333"/>
    <lineage>
        <taxon>Bacteria</taxon>
        <taxon>Pseudomonadati</taxon>
        <taxon>Pseudomonadota</taxon>
        <taxon>Gammaproteobacteria</taxon>
        <taxon>Enterobacterales</taxon>
        <taxon>Enterobacteriaceae</taxon>
        <taxon>Escherichia</taxon>
    </lineage>
</organism>
<accession>C1P603</accession>
<name>YOAJ_ECOLI</name>